<evidence type="ECO:0000255" key="1">
    <source>
        <dbReference type="HAMAP-Rule" id="MF_01184"/>
    </source>
</evidence>
<organism>
    <name type="scientific">Acinetobacter baumannii (strain AB0057)</name>
    <dbReference type="NCBI Taxonomy" id="480119"/>
    <lineage>
        <taxon>Bacteria</taxon>
        <taxon>Pseudomonadati</taxon>
        <taxon>Pseudomonadota</taxon>
        <taxon>Gammaproteobacteria</taxon>
        <taxon>Moraxellales</taxon>
        <taxon>Moraxellaceae</taxon>
        <taxon>Acinetobacter</taxon>
        <taxon>Acinetobacter calcoaceticus/baumannii complex</taxon>
    </lineage>
</organism>
<protein>
    <recommendedName>
        <fullName evidence="1">Xanthine phosphoribosyltransferase</fullName>
        <shortName evidence="1">XPRTase</shortName>
        <ecNumber evidence="1">2.4.2.22</ecNumber>
    </recommendedName>
</protein>
<sequence>MHALEQKILTEGIVLSDQVLKVDAFLNHQIDPVLMQQIGKEFAARFKDAGITKIITIEASGIAPAIMAGLELGVPVIFARKYQSLTLKDDLYRAKVFSFTKQTESTIAISNKHINSSDKALVIDDFLANGQAALGLIDLIHQANAEVVGVGIVIEKSFQPGRDLLLEKGYRVESLARVQSLADGTVTFVKE</sequence>
<feature type="chain" id="PRO_1000138227" description="Xanthine phosphoribosyltransferase">
    <location>
        <begin position="1"/>
        <end position="191"/>
    </location>
</feature>
<feature type="binding site" evidence="1">
    <location>
        <position position="20"/>
    </location>
    <ligand>
        <name>xanthine</name>
        <dbReference type="ChEBI" id="CHEBI:17712"/>
    </ligand>
</feature>
<feature type="binding site" evidence="1">
    <location>
        <position position="27"/>
    </location>
    <ligand>
        <name>xanthine</name>
        <dbReference type="ChEBI" id="CHEBI:17712"/>
    </ligand>
</feature>
<feature type="binding site" evidence="1">
    <location>
        <begin position="128"/>
        <end position="132"/>
    </location>
    <ligand>
        <name>5-phospho-alpha-D-ribose 1-diphosphate</name>
        <dbReference type="ChEBI" id="CHEBI:58017"/>
    </ligand>
</feature>
<feature type="binding site" evidence="1">
    <location>
        <position position="156"/>
    </location>
    <ligand>
        <name>xanthine</name>
        <dbReference type="ChEBI" id="CHEBI:17712"/>
    </ligand>
</feature>
<dbReference type="EC" id="2.4.2.22" evidence="1"/>
<dbReference type="EMBL" id="CP001182">
    <property type="protein sequence ID" value="ACJ42850.1"/>
    <property type="molecule type" value="Genomic_DNA"/>
</dbReference>
<dbReference type="RefSeq" id="WP_000543071.1">
    <property type="nucleotide sequence ID" value="NC_011586.2"/>
</dbReference>
<dbReference type="SMR" id="B7I9E1"/>
<dbReference type="KEGG" id="abn:AB57_3483"/>
<dbReference type="HOGENOM" id="CLU_099015_0_0_6"/>
<dbReference type="UniPathway" id="UPA00602">
    <property type="reaction ID" value="UER00658"/>
</dbReference>
<dbReference type="Proteomes" id="UP000007094">
    <property type="component" value="Chromosome"/>
</dbReference>
<dbReference type="GO" id="GO:0005737">
    <property type="term" value="C:cytoplasm"/>
    <property type="evidence" value="ECO:0007669"/>
    <property type="project" value="UniProtKB-SubCell"/>
</dbReference>
<dbReference type="GO" id="GO:0000310">
    <property type="term" value="F:xanthine phosphoribosyltransferase activity"/>
    <property type="evidence" value="ECO:0007669"/>
    <property type="project" value="UniProtKB-UniRule"/>
</dbReference>
<dbReference type="GO" id="GO:0006166">
    <property type="term" value="P:purine ribonucleoside salvage"/>
    <property type="evidence" value="ECO:0007669"/>
    <property type="project" value="UniProtKB-KW"/>
</dbReference>
<dbReference type="GO" id="GO:0046110">
    <property type="term" value="P:xanthine metabolic process"/>
    <property type="evidence" value="ECO:0007669"/>
    <property type="project" value="InterPro"/>
</dbReference>
<dbReference type="GO" id="GO:0032265">
    <property type="term" value="P:XMP salvage"/>
    <property type="evidence" value="ECO:0007669"/>
    <property type="project" value="UniProtKB-UniRule"/>
</dbReference>
<dbReference type="CDD" id="cd06223">
    <property type="entry name" value="PRTases_typeI"/>
    <property type="match status" value="1"/>
</dbReference>
<dbReference type="Gene3D" id="3.40.50.2020">
    <property type="match status" value="1"/>
</dbReference>
<dbReference type="HAMAP" id="MF_01184">
    <property type="entry name" value="XPRTase"/>
    <property type="match status" value="1"/>
</dbReference>
<dbReference type="InterPro" id="IPR000836">
    <property type="entry name" value="PRibTrfase_dom"/>
</dbReference>
<dbReference type="InterPro" id="IPR029057">
    <property type="entry name" value="PRTase-like"/>
</dbReference>
<dbReference type="InterPro" id="IPR050118">
    <property type="entry name" value="Pur/Pyrimidine_PRTase"/>
</dbReference>
<dbReference type="InterPro" id="IPR010079">
    <property type="entry name" value="Xanthine_PRibTrfase"/>
</dbReference>
<dbReference type="NCBIfam" id="NF006671">
    <property type="entry name" value="PRK09219.1"/>
    <property type="match status" value="1"/>
</dbReference>
<dbReference type="NCBIfam" id="TIGR01744">
    <property type="entry name" value="XPRTase"/>
    <property type="match status" value="1"/>
</dbReference>
<dbReference type="PANTHER" id="PTHR43864">
    <property type="entry name" value="HYPOXANTHINE/GUANINE PHOSPHORIBOSYLTRANSFERASE"/>
    <property type="match status" value="1"/>
</dbReference>
<dbReference type="PANTHER" id="PTHR43864:SF1">
    <property type="entry name" value="XANTHINE PHOSPHORIBOSYLTRANSFERASE"/>
    <property type="match status" value="1"/>
</dbReference>
<dbReference type="SUPFAM" id="SSF53271">
    <property type="entry name" value="PRTase-like"/>
    <property type="match status" value="1"/>
</dbReference>
<reference key="1">
    <citation type="journal article" date="2008" name="J. Bacteriol.">
        <title>Comparative genome sequence analysis of multidrug-resistant Acinetobacter baumannii.</title>
        <authorList>
            <person name="Adams M.D."/>
            <person name="Goglin K."/>
            <person name="Molyneaux N."/>
            <person name="Hujer K.M."/>
            <person name="Lavender H."/>
            <person name="Jamison J.J."/>
            <person name="MacDonald I.J."/>
            <person name="Martin K.M."/>
            <person name="Russo T."/>
            <person name="Campagnari A.A."/>
            <person name="Hujer A.M."/>
            <person name="Bonomo R.A."/>
            <person name="Gill S.R."/>
        </authorList>
    </citation>
    <scope>NUCLEOTIDE SEQUENCE [LARGE SCALE GENOMIC DNA]</scope>
    <source>
        <strain>AB0057</strain>
    </source>
</reference>
<gene>
    <name evidence="1" type="primary">xpt</name>
    <name type="ordered locus">AB57_3483</name>
</gene>
<name>XPT_ACIB5</name>
<proteinExistence type="inferred from homology"/>
<keyword id="KW-0963">Cytoplasm</keyword>
<keyword id="KW-0328">Glycosyltransferase</keyword>
<keyword id="KW-0660">Purine salvage</keyword>
<keyword id="KW-0808">Transferase</keyword>
<accession>B7I9E1</accession>
<comment type="function">
    <text evidence="1">Converts the preformed base xanthine, a product of nucleic acid breakdown, to xanthosine 5'-monophosphate (XMP), so it can be reused for RNA or DNA synthesis.</text>
</comment>
<comment type="catalytic activity">
    <reaction evidence="1">
        <text>XMP + diphosphate = xanthine + 5-phospho-alpha-D-ribose 1-diphosphate</text>
        <dbReference type="Rhea" id="RHEA:10800"/>
        <dbReference type="ChEBI" id="CHEBI:17712"/>
        <dbReference type="ChEBI" id="CHEBI:33019"/>
        <dbReference type="ChEBI" id="CHEBI:57464"/>
        <dbReference type="ChEBI" id="CHEBI:58017"/>
        <dbReference type="EC" id="2.4.2.22"/>
    </reaction>
</comment>
<comment type="pathway">
    <text evidence="1">Purine metabolism; XMP biosynthesis via salvage pathway; XMP from xanthine: step 1/1.</text>
</comment>
<comment type="subunit">
    <text evidence="1">Homodimer.</text>
</comment>
<comment type="subcellular location">
    <subcellularLocation>
        <location evidence="1">Cytoplasm</location>
    </subcellularLocation>
</comment>
<comment type="similarity">
    <text evidence="1">Belongs to the purine/pyrimidine phosphoribosyltransferase family. Xpt subfamily.</text>
</comment>